<feature type="chain" id="PRO_0000409664" description="Serine/threonine-protein kinase SRPK">
    <location>
        <begin position="1"/>
        <end position="426"/>
    </location>
</feature>
<feature type="domain" description="Protein kinase" evidence="3">
    <location>
        <begin position="56"/>
        <end position="419"/>
    </location>
</feature>
<feature type="region of interest" description="Disordered" evidence="4">
    <location>
        <begin position="1"/>
        <end position="40"/>
    </location>
</feature>
<feature type="short sequence motif" description="Nuclear localization signal" evidence="6">
    <location>
        <begin position="318"/>
        <end position="328"/>
    </location>
</feature>
<feature type="compositionally biased region" description="Basic and acidic residues" evidence="4">
    <location>
        <begin position="1"/>
        <end position="23"/>
    </location>
</feature>
<feature type="compositionally biased region" description="Acidic residues" evidence="4">
    <location>
        <begin position="24"/>
        <end position="35"/>
    </location>
</feature>
<feature type="active site" description="Proton acceptor" evidence="9">
    <location>
        <position position="188"/>
    </location>
</feature>
<feature type="binding site" evidence="1 3">
    <location>
        <begin position="62"/>
        <end position="70"/>
    </location>
    <ligand>
        <name>ATP</name>
        <dbReference type="ChEBI" id="CHEBI:30616"/>
    </ligand>
</feature>
<feature type="binding site" evidence="9">
    <location>
        <position position="86"/>
    </location>
    <ligand>
        <name>ATP</name>
        <dbReference type="ChEBI" id="CHEBI:30616"/>
    </ligand>
</feature>
<feature type="mutagenesis site" description="Essential for activity." evidence="7">
    <original>K</original>
    <variation>M</variation>
    <location>
        <position position="86"/>
    </location>
</feature>
<feature type="mutagenesis site" description="Essential for activity." evidence="7">
    <original>D</original>
    <variation>A</variation>
    <location>
        <position position="188"/>
    </location>
</feature>
<feature type="mutagenesis site" description="Eliminates nuclear localization." evidence="6">
    <location>
        <begin position="318"/>
        <end position="323"/>
    </location>
</feature>
<feature type="mutagenesis site" description="Eliminates nuclear localization." evidence="6">
    <original>K</original>
    <variation>T</variation>
    <location>
        <position position="320"/>
    </location>
</feature>
<protein>
    <recommendedName>
        <fullName evidence="8">Serine/threonine-protein kinase SRPK</fullName>
        <shortName evidence="8">PSRPK</shortName>
        <ecNumber evidence="1">2.7.11.1</ecNumber>
    </recommendedName>
</protein>
<name>SRPK_PHYPO</name>
<sequence>MENIFKEKEKGKEKAKEEEKENDSGDLFDSEDEGTEDYKKGGYHPVKVGEVYKSNYRIVKKLGWGHFSTVWLAIDEKNGGREVALKIVKSASHYREAAEDEIHLLQTISEGDPESKYCVVKLLDSFLHTGPHGKHICMVFEKLGSNLLDLIKLHNYKGIPLPLVKCMTKQILIGLDYLHTKCKIIHTDLKPENVLLDHLLRPDTLNWDDQFLDGASSSSPISNDAENARQTRSGKIKWEPSARIADSLSRKIVKVPIVKIADLGTACWTHKHFTDDVQTRQYRCPEVILGQKWDTTIDMWSLACMVFELATGDLLFCPKKGDKYDKTDDHLALMIELLGRMPRSFITKGSKSEKYFNSKGELKYIRKLGPQWGMSDVLYEKYRFPKEEADKLSAFLLPMLQYEPEKRATARDSLEHPYMADVPPFL</sequence>
<keyword id="KW-0067">ATP-binding</keyword>
<keyword id="KW-0418">Kinase</keyword>
<keyword id="KW-0547">Nucleotide-binding</keyword>
<keyword id="KW-0539">Nucleus</keyword>
<keyword id="KW-0723">Serine/threonine-protein kinase</keyword>
<keyword id="KW-0808">Transferase</keyword>
<comment type="function">
    <text evidence="5 7">Phosphorylates serine/arginine-rich protein PSR.</text>
</comment>
<comment type="catalytic activity">
    <reaction evidence="1">
        <text>L-seryl-[protein] + ATP = O-phospho-L-seryl-[protein] + ADP + H(+)</text>
        <dbReference type="Rhea" id="RHEA:17989"/>
        <dbReference type="Rhea" id="RHEA-COMP:9863"/>
        <dbReference type="Rhea" id="RHEA-COMP:11604"/>
        <dbReference type="ChEBI" id="CHEBI:15378"/>
        <dbReference type="ChEBI" id="CHEBI:29999"/>
        <dbReference type="ChEBI" id="CHEBI:30616"/>
        <dbReference type="ChEBI" id="CHEBI:83421"/>
        <dbReference type="ChEBI" id="CHEBI:456216"/>
        <dbReference type="EC" id="2.7.11.1"/>
    </reaction>
</comment>
<comment type="catalytic activity">
    <reaction evidence="1">
        <text>L-threonyl-[protein] + ATP = O-phospho-L-threonyl-[protein] + ADP + H(+)</text>
        <dbReference type="Rhea" id="RHEA:46608"/>
        <dbReference type="Rhea" id="RHEA-COMP:11060"/>
        <dbReference type="Rhea" id="RHEA-COMP:11605"/>
        <dbReference type="ChEBI" id="CHEBI:15378"/>
        <dbReference type="ChEBI" id="CHEBI:30013"/>
        <dbReference type="ChEBI" id="CHEBI:30616"/>
        <dbReference type="ChEBI" id="CHEBI:61977"/>
        <dbReference type="ChEBI" id="CHEBI:456216"/>
        <dbReference type="EC" id="2.7.11.1"/>
    </reaction>
</comment>
<comment type="subcellular location">
    <subcellularLocation>
        <location evidence="6">Nucleus</location>
    </subcellularLocation>
</comment>
<comment type="similarity">
    <text evidence="2">Belongs to the protein kinase superfamily. CMGC Ser/Thr protein kinase family.</text>
</comment>
<reference evidence="9 10" key="1">
    <citation type="journal article" date="2009" name="Acta Biochim. Biophys. Sin.">
        <title>A novel Physarum polycephalum SR protein kinase specifically phosphorylates the RS domain of the human SR protein, ASF/SF2.</title>
        <authorList>
            <person name="Liu S."/>
            <person name="Kang K."/>
            <person name="Zhang J."/>
            <person name="Ouyang Q."/>
            <person name="Zhou Z."/>
            <person name="Tian S."/>
            <person name="Xing M."/>
        </authorList>
    </citation>
    <scope>NUCLEOTIDE SEQUENCE [MRNA]</scope>
    <scope>FUNCTION</scope>
</reference>
<reference evidence="9" key="2">
    <citation type="journal article" date="2009" name="BMC Biochem.">
        <title>Identification of a nuclear localization motif in the serine/arginine protein kinase PSRPK of physarum polycephalum.</title>
        <authorList>
            <person name="Liu S."/>
            <person name="Zhou Z."/>
            <person name="Lin Z."/>
            <person name="Ouyang Q."/>
            <person name="Zhang J."/>
            <person name="Tian S."/>
            <person name="Xing M."/>
        </authorList>
    </citation>
    <scope>SUBCELLULAR LOCATION</scope>
    <scope>MUTAGENESIS OF 318-PRO--LYS-323 AND LYS-320</scope>
    <scope>NUCLEAR LOCALIZATION SIGNAL</scope>
</reference>
<reference evidence="9" key="3">
    <citation type="journal article" date="2011" name="J. Biochem.">
        <title>Identification of a novel PSR as the substrate of an SR protein kinase in the true slime mold.</title>
        <authorList>
            <person name="Zhang Y.X."/>
            <person name="Xing M."/>
            <person name="Fei X."/>
            <person name="Zhang J.H."/>
            <person name="Tian S.L."/>
            <person name="Li M.H."/>
            <person name="Liu S.D."/>
        </authorList>
    </citation>
    <scope>FUNCTION</scope>
    <scope>MUTAGENESIS OF LYS-86 AND ASP-188</scope>
</reference>
<dbReference type="EC" id="2.7.11.1" evidence="1"/>
<dbReference type="EMBL" id="DQ140379">
    <property type="protein sequence ID" value="AAZ29249.1"/>
    <property type="molecule type" value="mRNA"/>
</dbReference>
<dbReference type="SMR" id="Q45FA5"/>
<dbReference type="GO" id="GO:0005737">
    <property type="term" value="C:cytoplasm"/>
    <property type="evidence" value="ECO:0007669"/>
    <property type="project" value="TreeGrafter"/>
</dbReference>
<dbReference type="GO" id="GO:0005634">
    <property type="term" value="C:nucleus"/>
    <property type="evidence" value="ECO:0007669"/>
    <property type="project" value="UniProtKB-SubCell"/>
</dbReference>
<dbReference type="GO" id="GO:0005524">
    <property type="term" value="F:ATP binding"/>
    <property type="evidence" value="ECO:0007669"/>
    <property type="project" value="UniProtKB-KW"/>
</dbReference>
<dbReference type="GO" id="GO:0106310">
    <property type="term" value="F:protein serine kinase activity"/>
    <property type="evidence" value="ECO:0007669"/>
    <property type="project" value="RHEA"/>
</dbReference>
<dbReference type="GO" id="GO:0004674">
    <property type="term" value="F:protein serine/threonine kinase activity"/>
    <property type="evidence" value="ECO:0007669"/>
    <property type="project" value="UniProtKB-KW"/>
</dbReference>
<dbReference type="GO" id="GO:0050684">
    <property type="term" value="P:regulation of mRNA processing"/>
    <property type="evidence" value="ECO:0007669"/>
    <property type="project" value="TreeGrafter"/>
</dbReference>
<dbReference type="GO" id="GO:0000245">
    <property type="term" value="P:spliceosomal complex assembly"/>
    <property type="evidence" value="ECO:0007669"/>
    <property type="project" value="TreeGrafter"/>
</dbReference>
<dbReference type="CDD" id="cd14136">
    <property type="entry name" value="STKc_SRPK"/>
    <property type="match status" value="1"/>
</dbReference>
<dbReference type="FunFam" id="3.30.200.20:FF:000770">
    <property type="entry name" value="SRSF protein kinase 2"/>
    <property type="match status" value="1"/>
</dbReference>
<dbReference type="FunFam" id="1.10.510.10:FF:000275">
    <property type="entry name" value="SRSF protein kinase 2 isoform X3"/>
    <property type="match status" value="1"/>
</dbReference>
<dbReference type="Gene3D" id="3.30.200.20">
    <property type="entry name" value="Phosphorylase Kinase, domain 1"/>
    <property type="match status" value="1"/>
</dbReference>
<dbReference type="Gene3D" id="1.10.510.10">
    <property type="entry name" value="Transferase(Phosphotransferase) domain 1"/>
    <property type="match status" value="1"/>
</dbReference>
<dbReference type="InterPro" id="IPR011009">
    <property type="entry name" value="Kinase-like_dom_sf"/>
</dbReference>
<dbReference type="InterPro" id="IPR000719">
    <property type="entry name" value="Prot_kinase_dom"/>
</dbReference>
<dbReference type="InterPro" id="IPR017441">
    <property type="entry name" value="Protein_kinase_ATP_BS"/>
</dbReference>
<dbReference type="InterPro" id="IPR008271">
    <property type="entry name" value="Ser/Thr_kinase_AS"/>
</dbReference>
<dbReference type="InterPro" id="IPR051334">
    <property type="entry name" value="SRPK"/>
</dbReference>
<dbReference type="PANTHER" id="PTHR47634">
    <property type="entry name" value="PROTEIN KINASE DOMAIN-CONTAINING PROTEIN-RELATED"/>
    <property type="match status" value="1"/>
</dbReference>
<dbReference type="PANTHER" id="PTHR47634:SF9">
    <property type="entry name" value="PROTEIN KINASE DOMAIN-CONTAINING PROTEIN-RELATED"/>
    <property type="match status" value="1"/>
</dbReference>
<dbReference type="Pfam" id="PF00069">
    <property type="entry name" value="Pkinase"/>
    <property type="match status" value="2"/>
</dbReference>
<dbReference type="SMART" id="SM00220">
    <property type="entry name" value="S_TKc"/>
    <property type="match status" value="1"/>
</dbReference>
<dbReference type="SUPFAM" id="SSF56112">
    <property type="entry name" value="Protein kinase-like (PK-like)"/>
    <property type="match status" value="1"/>
</dbReference>
<dbReference type="PROSITE" id="PS00107">
    <property type="entry name" value="PROTEIN_KINASE_ATP"/>
    <property type="match status" value="1"/>
</dbReference>
<dbReference type="PROSITE" id="PS50011">
    <property type="entry name" value="PROTEIN_KINASE_DOM"/>
    <property type="match status" value="1"/>
</dbReference>
<dbReference type="PROSITE" id="PS00108">
    <property type="entry name" value="PROTEIN_KINASE_ST"/>
    <property type="match status" value="1"/>
</dbReference>
<accession>Q45FA5</accession>
<proteinExistence type="evidence at protein level"/>
<organism>
    <name type="scientific">Physarum polycephalum</name>
    <name type="common">Slime mold</name>
    <dbReference type="NCBI Taxonomy" id="5791"/>
    <lineage>
        <taxon>Eukaryota</taxon>
        <taxon>Amoebozoa</taxon>
        <taxon>Evosea</taxon>
        <taxon>Eumycetozoa</taxon>
        <taxon>Myxogastria</taxon>
        <taxon>Myxogastromycetidae</taxon>
        <taxon>Physariida</taxon>
        <taxon>Physaraceae</taxon>
        <taxon>Physarum</taxon>
    </lineage>
</organism>
<evidence type="ECO:0000250" key="1">
    <source>
        <dbReference type="UniProtKB" id="Q96SB4"/>
    </source>
</evidence>
<evidence type="ECO:0000255" key="2"/>
<evidence type="ECO:0000255" key="3">
    <source>
        <dbReference type="PROSITE-ProRule" id="PRU00159"/>
    </source>
</evidence>
<evidence type="ECO:0000256" key="4">
    <source>
        <dbReference type="SAM" id="MobiDB-lite"/>
    </source>
</evidence>
<evidence type="ECO:0000269" key="5">
    <source>
    </source>
</evidence>
<evidence type="ECO:0000269" key="6">
    <source>
    </source>
</evidence>
<evidence type="ECO:0000269" key="7">
    <source>
    </source>
</evidence>
<evidence type="ECO:0000303" key="8">
    <source>
    </source>
</evidence>
<evidence type="ECO:0000305" key="9"/>
<evidence type="ECO:0000312" key="10">
    <source>
        <dbReference type="EMBL" id="AAZ29249.1"/>
    </source>
</evidence>